<organism>
    <name type="scientific">Shewanella sp. (strain ANA-3)</name>
    <dbReference type="NCBI Taxonomy" id="94122"/>
    <lineage>
        <taxon>Bacteria</taxon>
        <taxon>Pseudomonadati</taxon>
        <taxon>Pseudomonadota</taxon>
        <taxon>Gammaproteobacteria</taxon>
        <taxon>Alteromonadales</taxon>
        <taxon>Shewanellaceae</taxon>
        <taxon>Shewanella</taxon>
    </lineage>
</organism>
<protein>
    <recommendedName>
        <fullName evidence="1">Elongation factor P</fullName>
        <shortName evidence="1">EF-P</shortName>
    </recommendedName>
</protein>
<feature type="chain" id="PRO_1000010851" description="Elongation factor P">
    <location>
        <begin position="1"/>
        <end position="186"/>
    </location>
</feature>
<evidence type="ECO:0000255" key="1">
    <source>
        <dbReference type="HAMAP-Rule" id="MF_00141"/>
    </source>
</evidence>
<gene>
    <name evidence="1" type="primary">efp</name>
    <name type="ordered locus">Shewana3_2141</name>
</gene>
<dbReference type="EMBL" id="CP000469">
    <property type="protein sequence ID" value="ABK48371.1"/>
    <property type="molecule type" value="Genomic_DNA"/>
</dbReference>
<dbReference type="RefSeq" id="WP_011622801.1">
    <property type="nucleotide sequence ID" value="NC_008577.1"/>
</dbReference>
<dbReference type="SMR" id="A0KX52"/>
<dbReference type="STRING" id="94122.Shewana3_2141"/>
<dbReference type="KEGG" id="shn:Shewana3_2141"/>
<dbReference type="eggNOG" id="COG0231">
    <property type="taxonomic scope" value="Bacteria"/>
</dbReference>
<dbReference type="HOGENOM" id="CLU_074944_2_1_6"/>
<dbReference type="OrthoDB" id="9801844at2"/>
<dbReference type="UniPathway" id="UPA00345"/>
<dbReference type="Proteomes" id="UP000002589">
    <property type="component" value="Chromosome"/>
</dbReference>
<dbReference type="GO" id="GO:0005737">
    <property type="term" value="C:cytoplasm"/>
    <property type="evidence" value="ECO:0007669"/>
    <property type="project" value="UniProtKB-SubCell"/>
</dbReference>
<dbReference type="GO" id="GO:0003746">
    <property type="term" value="F:translation elongation factor activity"/>
    <property type="evidence" value="ECO:0007669"/>
    <property type="project" value="UniProtKB-UniRule"/>
</dbReference>
<dbReference type="GO" id="GO:0043043">
    <property type="term" value="P:peptide biosynthetic process"/>
    <property type="evidence" value="ECO:0007669"/>
    <property type="project" value="InterPro"/>
</dbReference>
<dbReference type="CDD" id="cd04470">
    <property type="entry name" value="S1_EF-P_repeat_1"/>
    <property type="match status" value="1"/>
</dbReference>
<dbReference type="CDD" id="cd05794">
    <property type="entry name" value="S1_EF-P_repeat_2"/>
    <property type="match status" value="1"/>
</dbReference>
<dbReference type="FunFam" id="2.30.30.30:FF:000003">
    <property type="entry name" value="Elongation factor P"/>
    <property type="match status" value="1"/>
</dbReference>
<dbReference type="FunFam" id="2.40.50.140:FF:000004">
    <property type="entry name" value="Elongation factor P"/>
    <property type="match status" value="1"/>
</dbReference>
<dbReference type="FunFam" id="2.40.50.140:FF:000009">
    <property type="entry name" value="Elongation factor P"/>
    <property type="match status" value="1"/>
</dbReference>
<dbReference type="Gene3D" id="2.30.30.30">
    <property type="match status" value="1"/>
</dbReference>
<dbReference type="Gene3D" id="2.40.50.140">
    <property type="entry name" value="Nucleic acid-binding proteins"/>
    <property type="match status" value="2"/>
</dbReference>
<dbReference type="HAMAP" id="MF_00141">
    <property type="entry name" value="EF_P"/>
    <property type="match status" value="1"/>
</dbReference>
<dbReference type="InterPro" id="IPR015365">
    <property type="entry name" value="Elong-fact-P_C"/>
</dbReference>
<dbReference type="InterPro" id="IPR012340">
    <property type="entry name" value="NA-bd_OB-fold"/>
</dbReference>
<dbReference type="InterPro" id="IPR014722">
    <property type="entry name" value="Rib_uL2_dom2"/>
</dbReference>
<dbReference type="InterPro" id="IPR020599">
    <property type="entry name" value="Transl_elong_fac_P/YeiP"/>
</dbReference>
<dbReference type="InterPro" id="IPR013185">
    <property type="entry name" value="Transl_elong_KOW-like"/>
</dbReference>
<dbReference type="InterPro" id="IPR001059">
    <property type="entry name" value="Transl_elong_P/YeiP_cen"/>
</dbReference>
<dbReference type="InterPro" id="IPR011768">
    <property type="entry name" value="Transl_elongation_fac_P"/>
</dbReference>
<dbReference type="InterPro" id="IPR008991">
    <property type="entry name" value="Translation_prot_SH3-like_sf"/>
</dbReference>
<dbReference type="NCBIfam" id="TIGR00038">
    <property type="entry name" value="efp"/>
    <property type="match status" value="1"/>
</dbReference>
<dbReference type="NCBIfam" id="NF001810">
    <property type="entry name" value="PRK00529.1"/>
    <property type="match status" value="1"/>
</dbReference>
<dbReference type="PANTHER" id="PTHR30053">
    <property type="entry name" value="ELONGATION FACTOR P"/>
    <property type="match status" value="1"/>
</dbReference>
<dbReference type="PANTHER" id="PTHR30053:SF12">
    <property type="entry name" value="ELONGATION FACTOR P (EF-P) FAMILY PROTEIN"/>
    <property type="match status" value="1"/>
</dbReference>
<dbReference type="Pfam" id="PF01132">
    <property type="entry name" value="EFP"/>
    <property type="match status" value="1"/>
</dbReference>
<dbReference type="Pfam" id="PF08207">
    <property type="entry name" value="EFP_N"/>
    <property type="match status" value="1"/>
</dbReference>
<dbReference type="Pfam" id="PF09285">
    <property type="entry name" value="Elong-fact-P_C"/>
    <property type="match status" value="1"/>
</dbReference>
<dbReference type="PIRSF" id="PIRSF005901">
    <property type="entry name" value="EF-P"/>
    <property type="match status" value="1"/>
</dbReference>
<dbReference type="SMART" id="SM01185">
    <property type="entry name" value="EFP"/>
    <property type="match status" value="1"/>
</dbReference>
<dbReference type="SMART" id="SM00841">
    <property type="entry name" value="Elong-fact-P_C"/>
    <property type="match status" value="1"/>
</dbReference>
<dbReference type="SUPFAM" id="SSF50249">
    <property type="entry name" value="Nucleic acid-binding proteins"/>
    <property type="match status" value="2"/>
</dbReference>
<dbReference type="SUPFAM" id="SSF50104">
    <property type="entry name" value="Translation proteins SH3-like domain"/>
    <property type="match status" value="1"/>
</dbReference>
<reference key="1">
    <citation type="submission" date="2006-09" db="EMBL/GenBank/DDBJ databases">
        <title>Complete sequence of chromosome 1 of Shewanella sp. ANA-3.</title>
        <authorList>
            <person name="Copeland A."/>
            <person name="Lucas S."/>
            <person name="Lapidus A."/>
            <person name="Barry K."/>
            <person name="Detter J.C."/>
            <person name="Glavina del Rio T."/>
            <person name="Hammon N."/>
            <person name="Israni S."/>
            <person name="Dalin E."/>
            <person name="Tice H."/>
            <person name="Pitluck S."/>
            <person name="Chertkov O."/>
            <person name="Brettin T."/>
            <person name="Bruce D."/>
            <person name="Han C."/>
            <person name="Tapia R."/>
            <person name="Gilna P."/>
            <person name="Schmutz J."/>
            <person name="Larimer F."/>
            <person name="Land M."/>
            <person name="Hauser L."/>
            <person name="Kyrpides N."/>
            <person name="Kim E."/>
            <person name="Newman D."/>
            <person name="Salticov C."/>
            <person name="Konstantinidis K."/>
            <person name="Klappenback J."/>
            <person name="Tiedje J."/>
            <person name="Richardson P."/>
        </authorList>
    </citation>
    <scope>NUCLEOTIDE SEQUENCE [LARGE SCALE GENOMIC DNA]</scope>
    <source>
        <strain>ANA-3</strain>
    </source>
</reference>
<sequence length="186" mass="20633">MKTAHEVRPGNVIMFEGSPWVVQKTETTRSGRNAAIVKLKLKNLLLNSGTETTFKGEDKIDDIILDRLDCTYSYFADPMYVFMDAEYNQYDVEAENLGDAAAYIVDGMEETCQVTFYEGKAISVEMPTTIVREVIYTEPSARGDTSGKVMKPATITGGGTISVADFVKVGDKIEIDTRTGEFKKRV</sequence>
<name>EFP_SHESA</name>
<proteinExistence type="inferred from homology"/>
<keyword id="KW-0963">Cytoplasm</keyword>
<keyword id="KW-0251">Elongation factor</keyword>
<keyword id="KW-0648">Protein biosynthesis</keyword>
<accession>A0KX52</accession>
<comment type="function">
    <text evidence="1">Involved in peptide bond synthesis. Stimulates efficient translation and peptide-bond synthesis on native or reconstituted 70S ribosomes in vitro. Probably functions indirectly by altering the affinity of the ribosome for aminoacyl-tRNA, thus increasing their reactivity as acceptors for peptidyl transferase.</text>
</comment>
<comment type="pathway">
    <text evidence="1">Protein biosynthesis; polypeptide chain elongation.</text>
</comment>
<comment type="subcellular location">
    <subcellularLocation>
        <location evidence="1">Cytoplasm</location>
    </subcellularLocation>
</comment>
<comment type="similarity">
    <text evidence="1">Belongs to the elongation factor P family.</text>
</comment>